<keyword id="KW-0238">DNA-binding</keyword>
<keyword id="KW-0479">Metal-binding</keyword>
<keyword id="KW-0539">Nucleus</keyword>
<keyword id="KW-0804">Transcription</keyword>
<keyword id="KW-0805">Transcription regulation</keyword>
<keyword id="KW-0862">Zinc</keyword>
<accession>A0A481WNM7</accession>
<name>CLAA_PENCR</name>
<dbReference type="EMBL" id="MK360918">
    <property type="protein sequence ID" value="QBK15039.1"/>
    <property type="molecule type" value="Genomic_DNA"/>
</dbReference>
<dbReference type="SMR" id="A0A481WNM7"/>
<dbReference type="GO" id="GO:0005634">
    <property type="term" value="C:nucleus"/>
    <property type="evidence" value="ECO:0007669"/>
    <property type="project" value="UniProtKB-SubCell"/>
</dbReference>
<dbReference type="GO" id="GO:0003677">
    <property type="term" value="F:DNA binding"/>
    <property type="evidence" value="ECO:0007669"/>
    <property type="project" value="UniProtKB-KW"/>
</dbReference>
<dbReference type="GO" id="GO:0000981">
    <property type="term" value="F:DNA-binding transcription factor activity, RNA polymerase II-specific"/>
    <property type="evidence" value="ECO:0007669"/>
    <property type="project" value="InterPro"/>
</dbReference>
<dbReference type="GO" id="GO:0008270">
    <property type="term" value="F:zinc ion binding"/>
    <property type="evidence" value="ECO:0007669"/>
    <property type="project" value="InterPro"/>
</dbReference>
<dbReference type="CDD" id="cd00067">
    <property type="entry name" value="GAL4"/>
    <property type="match status" value="1"/>
</dbReference>
<dbReference type="Gene3D" id="4.10.240.10">
    <property type="entry name" value="Zn(2)-C6 fungal-type DNA-binding domain"/>
    <property type="match status" value="1"/>
</dbReference>
<dbReference type="InterPro" id="IPR050675">
    <property type="entry name" value="OAF3"/>
</dbReference>
<dbReference type="InterPro" id="IPR036864">
    <property type="entry name" value="Zn2-C6_fun-type_DNA-bd_sf"/>
</dbReference>
<dbReference type="InterPro" id="IPR001138">
    <property type="entry name" value="Zn2Cys6_DnaBD"/>
</dbReference>
<dbReference type="PANTHER" id="PTHR31069:SF31">
    <property type="entry name" value="MONODICTYPHENONE CLUSTER TRANSCRIPTION FACTOR-RELATED"/>
    <property type="match status" value="1"/>
</dbReference>
<dbReference type="PANTHER" id="PTHR31069">
    <property type="entry name" value="OLEATE-ACTIVATED TRANSCRIPTION FACTOR 1-RELATED"/>
    <property type="match status" value="1"/>
</dbReference>
<dbReference type="Pfam" id="PF00172">
    <property type="entry name" value="Zn_clus"/>
    <property type="match status" value="1"/>
</dbReference>
<dbReference type="PRINTS" id="PR00755">
    <property type="entry name" value="AFLATOXINBRP"/>
</dbReference>
<dbReference type="SMART" id="SM00066">
    <property type="entry name" value="GAL4"/>
    <property type="match status" value="1"/>
</dbReference>
<dbReference type="SUPFAM" id="SSF57701">
    <property type="entry name" value="Zn2/Cys6 DNA-binding domain"/>
    <property type="match status" value="1"/>
</dbReference>
<dbReference type="PROSITE" id="PS50048">
    <property type="entry name" value="ZN2_CY6_FUNGAL_2"/>
    <property type="match status" value="1"/>
</dbReference>
<proteinExistence type="inferred from homology"/>
<organism>
    <name type="scientific">Penicillium crustosum</name>
    <name type="common">Blue mold fungus</name>
    <dbReference type="NCBI Taxonomy" id="36656"/>
    <lineage>
        <taxon>Eukaryota</taxon>
        <taxon>Fungi</taxon>
        <taxon>Dikarya</taxon>
        <taxon>Ascomycota</taxon>
        <taxon>Pezizomycotina</taxon>
        <taxon>Eurotiomycetes</taxon>
        <taxon>Eurotiomycetidae</taxon>
        <taxon>Eurotiales</taxon>
        <taxon>Aspergillaceae</taxon>
        <taxon>Penicillium</taxon>
    </lineage>
</organism>
<reference key="1">
    <citation type="journal article" date="2019" name="J. Am. Chem. Soc.">
        <title>Peniphenone and penilactone formation in Penicillium crustosum via 1,4-Michael additions of ortho-quinone methide from hydroxyclavatol to gamma-butyrolactones from Crustosic Acid.</title>
        <authorList>
            <person name="Fan J."/>
            <person name="Liao G."/>
            <person name="Kindinger F."/>
            <person name="Ludwig-Radtke L."/>
            <person name="Yin W.B."/>
            <person name="Li S.M."/>
        </authorList>
    </citation>
    <scope>NUCLEOTIDE SEQUENCE [GENOMIC DNA]</scope>
    <scope>FUNCTION</scope>
    <source>
        <strain>PRB-2</strain>
    </source>
</reference>
<evidence type="ECO:0000255" key="1">
    <source>
        <dbReference type="PROSITE-ProRule" id="PRU00227"/>
    </source>
</evidence>
<evidence type="ECO:0000256" key="2">
    <source>
        <dbReference type="SAM" id="MobiDB-lite"/>
    </source>
</evidence>
<evidence type="ECO:0000269" key="3">
    <source>
    </source>
</evidence>
<evidence type="ECO:0000303" key="4">
    <source>
    </source>
</evidence>
<comment type="function">
    <text evidence="3">Transcriptional regulator; part of the cla gene cluster that produces clavatol and ortho-quinone methide (PubMed:30811183). The clavatol biosynthesis cluster cla and the terrestric acid cluster tra are both involved in the production of peniphenones and penilactones (PubMed:30811183).</text>
</comment>
<comment type="subcellular location">
    <subcellularLocation>
        <location evidence="1">Nucleus</location>
    </subcellularLocation>
</comment>
<sequence>MLLQPESSSKPRNDSPPGFKFHSSCDTCLKAKIKCSQAKPTCARCLQQGRQCVYSPYRKIGRPSTKNLPLDQLQQPKGRTAGGTARRSLSRRVSLASPGIENGSRVGNVRHATNRVLHAQESVLVPSQTWSDQELTGNINRLDYGLEGTNWSALEGLLDASMSTLPQADHELASAVPRLDQVHDLDPNPGQEDLTGYLSPSSLSSRESLATTFPPEAEAGSFGLSSEFPFSAGYSLGTGPVLSESLNAFPVLSSFPSSASSPVTEARGFNLLSAPTDRCTFQCYPVLINILNDMNEFQRKSSGLPLDVLLNLDKRVRKVHETILGCPCCLVSCAAALTLMLITMVNINLLSLFERSCGSTDGGSGSSMSRGELNVAPRIAFGGGNYAGQDRSRNPLPYTTGHLTLGNIHLDETVKLVFSRRLVRLYLERQLGVVQQLSQLLGRVEGDGASIKVTQDLLRDQLRRLEHFVGFITLTD</sequence>
<protein>
    <recommendedName>
        <fullName evidence="4">Transcriptional regulator claA</fullName>
    </recommendedName>
    <alternativeName>
        <fullName evidence="4">Clavatol biosynthesis cluster protein A</fullName>
    </alternativeName>
</protein>
<gene>
    <name evidence="4" type="primary">claA</name>
</gene>
<feature type="chain" id="PRO_0000455056" description="Transcriptional regulator claA">
    <location>
        <begin position="1"/>
        <end position="476"/>
    </location>
</feature>
<feature type="DNA-binding region" description="Zn(2)-C6 fungal-type" evidence="1">
    <location>
        <begin position="25"/>
        <end position="52"/>
    </location>
</feature>
<feature type="region of interest" description="Disordered" evidence="2">
    <location>
        <begin position="63"/>
        <end position="92"/>
    </location>
</feature>
<feature type="compositionally biased region" description="Polar residues" evidence="2">
    <location>
        <begin position="64"/>
        <end position="77"/>
    </location>
</feature>